<gene>
    <name type="primary">SPT5</name>
    <name type="ordered locus">CAALFM_C201480WA</name>
    <name type="ORF">CaO19.1453</name>
    <name type="ORF">CaO19.9028</name>
</gene>
<organism>
    <name type="scientific">Candida albicans (strain SC5314 / ATCC MYA-2876)</name>
    <name type="common">Yeast</name>
    <dbReference type="NCBI Taxonomy" id="237561"/>
    <lineage>
        <taxon>Eukaryota</taxon>
        <taxon>Fungi</taxon>
        <taxon>Dikarya</taxon>
        <taxon>Ascomycota</taxon>
        <taxon>Saccharomycotina</taxon>
        <taxon>Pichiomycetes</taxon>
        <taxon>Debaryomycetaceae</taxon>
        <taxon>Candida/Lodderomyces clade</taxon>
        <taxon>Candida</taxon>
    </lineage>
</organism>
<proteinExistence type="inferred from homology"/>
<reference key="1">
    <citation type="journal article" date="2004" name="Proc. Natl. Acad. Sci. U.S.A.">
        <title>The diploid genome sequence of Candida albicans.</title>
        <authorList>
            <person name="Jones T."/>
            <person name="Federspiel N.A."/>
            <person name="Chibana H."/>
            <person name="Dungan J."/>
            <person name="Kalman S."/>
            <person name="Magee B.B."/>
            <person name="Newport G."/>
            <person name="Thorstenson Y.R."/>
            <person name="Agabian N."/>
            <person name="Magee P.T."/>
            <person name="Davis R.W."/>
            <person name="Scherer S."/>
        </authorList>
    </citation>
    <scope>NUCLEOTIDE SEQUENCE [LARGE SCALE GENOMIC DNA]</scope>
    <source>
        <strain>SC5314 / ATCC MYA-2876</strain>
    </source>
</reference>
<reference key="2">
    <citation type="journal article" date="2007" name="Genome Biol.">
        <title>Assembly of the Candida albicans genome into sixteen supercontigs aligned on the eight chromosomes.</title>
        <authorList>
            <person name="van het Hoog M."/>
            <person name="Rast T.J."/>
            <person name="Martchenko M."/>
            <person name="Grindle S."/>
            <person name="Dignard D."/>
            <person name="Hogues H."/>
            <person name="Cuomo C."/>
            <person name="Berriman M."/>
            <person name="Scherer S."/>
            <person name="Magee B.B."/>
            <person name="Whiteway M."/>
            <person name="Chibana H."/>
            <person name="Nantel A."/>
            <person name="Magee P.T."/>
        </authorList>
    </citation>
    <scope>GENOME REANNOTATION</scope>
    <source>
        <strain>SC5314 / ATCC MYA-2876</strain>
    </source>
</reference>
<reference key="3">
    <citation type="journal article" date="2013" name="Genome Biol.">
        <title>Assembly of a phased diploid Candida albicans genome facilitates allele-specific measurements and provides a simple model for repeat and indel structure.</title>
        <authorList>
            <person name="Muzzey D."/>
            <person name="Schwartz K."/>
            <person name="Weissman J.S."/>
            <person name="Sherlock G."/>
        </authorList>
    </citation>
    <scope>NUCLEOTIDE SEQUENCE [LARGE SCALE GENOMIC DNA]</scope>
    <scope>GENOME REANNOTATION</scope>
    <source>
        <strain>SC5314 / ATCC MYA-2876</strain>
    </source>
</reference>
<protein>
    <recommendedName>
        <fullName>Transcription elongation factor SPT5</fullName>
    </recommendedName>
    <alternativeName>
        <fullName>Chromatin elongation factor SPT5</fullName>
    </alternativeName>
</protein>
<comment type="function">
    <text evidence="1">The SPT4-SPT5 complex mediates both activation and inhibition of transcription elongation, and plays a role in pre-mRNA processing. This complex seems to be important for the stability of the RNA polymerase II elongation machinery on the chromatin template but not for the inherent ability of this machinery to translocate down the gene (By similarity).</text>
</comment>
<comment type="subunit">
    <text evidence="1">Component of the SPT4-SPT5 complex. Interacts with RNA polymerase II (By similarity).</text>
</comment>
<comment type="subcellular location">
    <subcellularLocation>
        <location evidence="1">Nucleus</location>
    </subcellularLocation>
</comment>
<comment type="similarity">
    <text evidence="3">Belongs to the SPT5 family.</text>
</comment>
<dbReference type="EMBL" id="CP017624">
    <property type="protein sequence ID" value="AOW27194.1"/>
    <property type="molecule type" value="Genomic_DNA"/>
</dbReference>
<dbReference type="RefSeq" id="XP_722503.1">
    <property type="nucleotide sequence ID" value="XM_717410.1"/>
</dbReference>
<dbReference type="SMR" id="Q5ALX3"/>
<dbReference type="BioGRID" id="1218941">
    <property type="interactions" value="1"/>
</dbReference>
<dbReference type="FunCoup" id="Q5ALX3">
    <property type="interactions" value="1401"/>
</dbReference>
<dbReference type="STRING" id="237561.Q5ALX3"/>
<dbReference type="EnsemblFungi" id="C2_01480W_A-T">
    <property type="protein sequence ID" value="C2_01480W_A-T-p1"/>
    <property type="gene ID" value="C2_01480W_A"/>
</dbReference>
<dbReference type="GeneID" id="3635847"/>
<dbReference type="KEGG" id="cal:CAALFM_C201480WA"/>
<dbReference type="CGD" id="CAL0000192268">
    <property type="gene designation" value="SPT5"/>
</dbReference>
<dbReference type="VEuPathDB" id="FungiDB:C2_01480W_A"/>
<dbReference type="eggNOG" id="KOG1999">
    <property type="taxonomic scope" value="Eukaryota"/>
</dbReference>
<dbReference type="HOGENOM" id="CLU_003537_1_0_1"/>
<dbReference type="InParanoid" id="Q5ALX3"/>
<dbReference type="OMA" id="FLAWDVE"/>
<dbReference type="OrthoDB" id="28901at2759"/>
<dbReference type="PRO" id="PR:Q5ALX3"/>
<dbReference type="Proteomes" id="UP000000559">
    <property type="component" value="Chromosome 2"/>
</dbReference>
<dbReference type="GO" id="GO:0032044">
    <property type="term" value="C:DSIF complex"/>
    <property type="evidence" value="ECO:0000318"/>
    <property type="project" value="GO_Central"/>
</dbReference>
<dbReference type="GO" id="GO:0033553">
    <property type="term" value="C:rDNA heterochromatin"/>
    <property type="evidence" value="ECO:0007669"/>
    <property type="project" value="EnsemblFungi"/>
</dbReference>
<dbReference type="GO" id="GO:0140463">
    <property type="term" value="F:chromatin-protein adaptor activity"/>
    <property type="evidence" value="ECO:0007669"/>
    <property type="project" value="EnsemblFungi"/>
</dbReference>
<dbReference type="GO" id="GO:0003677">
    <property type="term" value="F:DNA binding"/>
    <property type="evidence" value="ECO:0007669"/>
    <property type="project" value="EnsemblFungi"/>
</dbReference>
<dbReference type="GO" id="GO:0042393">
    <property type="term" value="F:histone binding"/>
    <property type="evidence" value="ECO:0007669"/>
    <property type="project" value="EnsemblFungi"/>
</dbReference>
<dbReference type="GO" id="GO:0003729">
    <property type="term" value="F:mRNA binding"/>
    <property type="evidence" value="ECO:0000318"/>
    <property type="project" value="GO_Central"/>
</dbReference>
<dbReference type="GO" id="GO:0001042">
    <property type="term" value="F:RNA polymerase I core binding"/>
    <property type="evidence" value="ECO:0007669"/>
    <property type="project" value="EnsemblFungi"/>
</dbReference>
<dbReference type="GO" id="GO:0001179">
    <property type="term" value="F:RNA polymerase I general transcription initiation factor binding"/>
    <property type="evidence" value="ECO:0007669"/>
    <property type="project" value="EnsemblFungi"/>
</dbReference>
<dbReference type="GO" id="GO:0000993">
    <property type="term" value="F:RNA polymerase II complex binding"/>
    <property type="evidence" value="ECO:0007669"/>
    <property type="project" value="EnsemblFungi"/>
</dbReference>
<dbReference type="GO" id="GO:0019843">
    <property type="term" value="F:rRNA binding"/>
    <property type="evidence" value="ECO:0007669"/>
    <property type="project" value="EnsemblFungi"/>
</dbReference>
<dbReference type="GO" id="GO:0003727">
    <property type="term" value="F:single-stranded RNA binding"/>
    <property type="evidence" value="ECO:0007669"/>
    <property type="project" value="EnsemblFungi"/>
</dbReference>
<dbReference type="GO" id="GO:0070990">
    <property type="term" value="F:snRNP binding"/>
    <property type="evidence" value="ECO:0007669"/>
    <property type="project" value="EnsemblFungi"/>
</dbReference>
<dbReference type="GO" id="GO:0003711">
    <property type="term" value="F:transcription elongation factor activity"/>
    <property type="evidence" value="ECO:0007669"/>
    <property type="project" value="EnsemblFungi"/>
</dbReference>
<dbReference type="GO" id="GO:0030619">
    <property type="term" value="F:U1 snRNA binding"/>
    <property type="evidence" value="ECO:0007669"/>
    <property type="project" value="EnsemblFungi"/>
</dbReference>
<dbReference type="GO" id="GO:0030620">
    <property type="term" value="F:U2 snRNA binding"/>
    <property type="evidence" value="ECO:0007669"/>
    <property type="project" value="EnsemblFungi"/>
</dbReference>
<dbReference type="GO" id="GO:0030621">
    <property type="term" value="F:U4 snRNA binding"/>
    <property type="evidence" value="ECO:0007669"/>
    <property type="project" value="EnsemblFungi"/>
</dbReference>
<dbReference type="GO" id="GO:0030623">
    <property type="term" value="F:U5 snRNA binding"/>
    <property type="evidence" value="ECO:0007669"/>
    <property type="project" value="EnsemblFungi"/>
</dbReference>
<dbReference type="GO" id="GO:0017070">
    <property type="term" value="F:U6 snRNA binding"/>
    <property type="evidence" value="ECO:0007669"/>
    <property type="project" value="EnsemblFungi"/>
</dbReference>
<dbReference type="GO" id="GO:0009267">
    <property type="term" value="P:cellular response to starvation"/>
    <property type="evidence" value="ECO:0000315"/>
    <property type="project" value="CGD"/>
</dbReference>
<dbReference type="GO" id="GO:0030447">
    <property type="term" value="P:filamentous growth"/>
    <property type="evidence" value="ECO:0000315"/>
    <property type="project" value="CGD"/>
</dbReference>
<dbReference type="GO" id="GO:0036180">
    <property type="term" value="P:filamentous growth of a population of unicellular organisms in response to biotic stimulus"/>
    <property type="evidence" value="ECO:0000315"/>
    <property type="project" value="CGD"/>
</dbReference>
<dbReference type="GO" id="GO:0036170">
    <property type="term" value="P:filamentous growth of a population of unicellular organisms in response to starvation"/>
    <property type="evidence" value="ECO:0000315"/>
    <property type="project" value="CGD"/>
</dbReference>
<dbReference type="GO" id="GO:0044180">
    <property type="term" value="P:filamentous growth of a unicellular organism"/>
    <property type="evidence" value="ECO:0000315"/>
    <property type="project" value="CGD"/>
</dbReference>
<dbReference type="GO" id="GO:0008298">
    <property type="term" value="P:intracellular mRNA localization"/>
    <property type="evidence" value="ECO:0007669"/>
    <property type="project" value="EnsemblFungi"/>
</dbReference>
<dbReference type="GO" id="GO:2001208">
    <property type="term" value="P:negative regulation of transcription elongation by RNA polymerase I"/>
    <property type="evidence" value="ECO:0007669"/>
    <property type="project" value="EnsemblFungi"/>
</dbReference>
<dbReference type="GO" id="GO:0010508">
    <property type="term" value="P:positive regulation of autophagy"/>
    <property type="evidence" value="ECO:0007669"/>
    <property type="project" value="EnsemblFungi"/>
</dbReference>
<dbReference type="GO" id="GO:2001209">
    <property type="term" value="P:positive regulation of transcription elongation by RNA polymerase I"/>
    <property type="evidence" value="ECO:0007669"/>
    <property type="project" value="EnsemblFungi"/>
</dbReference>
<dbReference type="GO" id="GO:0032968">
    <property type="term" value="P:positive regulation of transcription elongation by RNA polymerase II"/>
    <property type="evidence" value="ECO:0007669"/>
    <property type="project" value="EnsemblFungi"/>
</dbReference>
<dbReference type="GO" id="GO:2000232">
    <property type="term" value="P:regulation of rRNA processing"/>
    <property type="evidence" value="ECO:0007669"/>
    <property type="project" value="EnsemblFungi"/>
</dbReference>
<dbReference type="GO" id="GO:0090262">
    <property type="term" value="P:regulation of transcription-coupled nucleotide-excision repair"/>
    <property type="evidence" value="ECO:0007669"/>
    <property type="project" value="EnsemblFungi"/>
</dbReference>
<dbReference type="GO" id="GO:0000245">
    <property type="term" value="P:spliceosomal complex assembly"/>
    <property type="evidence" value="ECO:0007669"/>
    <property type="project" value="EnsemblFungi"/>
</dbReference>
<dbReference type="GO" id="GO:0006368">
    <property type="term" value="P:transcription elongation by RNA polymerase II"/>
    <property type="evidence" value="ECO:0000318"/>
    <property type="project" value="GO_Central"/>
</dbReference>
<dbReference type="GO" id="GO:0140673">
    <property type="term" value="P:transcription elongation-coupled chromatin remodeling"/>
    <property type="evidence" value="ECO:0007669"/>
    <property type="project" value="InterPro"/>
</dbReference>
<dbReference type="CDD" id="cd06081">
    <property type="entry name" value="KOW_Spt5_1"/>
    <property type="match status" value="1"/>
</dbReference>
<dbReference type="CDD" id="cd06082">
    <property type="entry name" value="KOW_Spt5_2"/>
    <property type="match status" value="1"/>
</dbReference>
<dbReference type="CDD" id="cd06083">
    <property type="entry name" value="KOW_Spt5_3"/>
    <property type="match status" value="1"/>
</dbReference>
<dbReference type="CDD" id="cd06084">
    <property type="entry name" value="KOW_Spt5_4"/>
    <property type="match status" value="1"/>
</dbReference>
<dbReference type="CDD" id="cd06085">
    <property type="entry name" value="KOW_Spt5_5"/>
    <property type="match status" value="1"/>
</dbReference>
<dbReference type="CDD" id="cd09888">
    <property type="entry name" value="NGN_Euk"/>
    <property type="match status" value="1"/>
</dbReference>
<dbReference type="FunFam" id="3.30.70.940:FF:000005">
    <property type="entry name" value="Transcription elongation factor SPT5"/>
    <property type="match status" value="1"/>
</dbReference>
<dbReference type="Gene3D" id="2.30.30.30">
    <property type="match status" value="3"/>
</dbReference>
<dbReference type="Gene3D" id="3.30.70.940">
    <property type="entry name" value="NusG, N-terminal domain"/>
    <property type="match status" value="1"/>
</dbReference>
<dbReference type="InterPro" id="IPR005824">
    <property type="entry name" value="KOW"/>
</dbReference>
<dbReference type="InterPro" id="IPR041973">
    <property type="entry name" value="KOW_Spt5_1"/>
</dbReference>
<dbReference type="InterPro" id="IPR041975">
    <property type="entry name" value="KOW_Spt5_2"/>
</dbReference>
<dbReference type="InterPro" id="IPR041976">
    <property type="entry name" value="KOW_Spt5_3"/>
</dbReference>
<dbReference type="InterPro" id="IPR041977">
    <property type="entry name" value="KOW_Spt5_4"/>
</dbReference>
<dbReference type="InterPro" id="IPR041978">
    <property type="entry name" value="KOW_Spt5_5"/>
</dbReference>
<dbReference type="InterPro" id="IPR005100">
    <property type="entry name" value="NGN-domain"/>
</dbReference>
<dbReference type="InterPro" id="IPR006645">
    <property type="entry name" value="NGN-like_dom"/>
</dbReference>
<dbReference type="InterPro" id="IPR036735">
    <property type="entry name" value="NGN_dom_sf"/>
</dbReference>
<dbReference type="InterPro" id="IPR039385">
    <property type="entry name" value="NGN_Euk"/>
</dbReference>
<dbReference type="InterPro" id="IPR014722">
    <property type="entry name" value="Rib_uL2_dom2"/>
</dbReference>
<dbReference type="InterPro" id="IPR039659">
    <property type="entry name" value="SPT5"/>
</dbReference>
<dbReference type="InterPro" id="IPR022581">
    <property type="entry name" value="Spt5_N"/>
</dbReference>
<dbReference type="InterPro" id="IPR017071">
    <property type="entry name" value="TF_Spt5_eukaryote"/>
</dbReference>
<dbReference type="InterPro" id="IPR008991">
    <property type="entry name" value="Translation_prot_SH3-like_sf"/>
</dbReference>
<dbReference type="PANTHER" id="PTHR11125">
    <property type="entry name" value="SUPPRESSOR OF TY 5"/>
    <property type="match status" value="1"/>
</dbReference>
<dbReference type="PANTHER" id="PTHR11125:SF7">
    <property type="entry name" value="TRANSCRIPTION ELONGATION FACTOR SPT5"/>
    <property type="match status" value="1"/>
</dbReference>
<dbReference type="Pfam" id="PF00467">
    <property type="entry name" value="KOW"/>
    <property type="match status" value="1"/>
</dbReference>
<dbReference type="Pfam" id="PF23042">
    <property type="entry name" value="KOW1_SPT5"/>
    <property type="match status" value="1"/>
</dbReference>
<dbReference type="Pfam" id="PF23284">
    <property type="entry name" value="KOW2_Spt5"/>
    <property type="match status" value="1"/>
</dbReference>
<dbReference type="Pfam" id="PF23291">
    <property type="entry name" value="KOW4_SPT5"/>
    <property type="match status" value="1"/>
</dbReference>
<dbReference type="Pfam" id="PF23290">
    <property type="entry name" value="KOW5_SPT5"/>
    <property type="match status" value="1"/>
</dbReference>
<dbReference type="Pfam" id="PF23037">
    <property type="entry name" value="KOWx_SPT5"/>
    <property type="match status" value="1"/>
</dbReference>
<dbReference type="Pfam" id="PF03439">
    <property type="entry name" value="Spt5-NGN"/>
    <property type="match status" value="1"/>
</dbReference>
<dbReference type="Pfam" id="PF11942">
    <property type="entry name" value="Spt5_N"/>
    <property type="match status" value="1"/>
</dbReference>
<dbReference type="PIRSF" id="PIRSF036945">
    <property type="entry name" value="Spt5"/>
    <property type="match status" value="1"/>
</dbReference>
<dbReference type="SMART" id="SM00739">
    <property type="entry name" value="KOW"/>
    <property type="match status" value="5"/>
</dbReference>
<dbReference type="SMART" id="SM00738">
    <property type="entry name" value="NGN"/>
    <property type="match status" value="1"/>
</dbReference>
<dbReference type="SUPFAM" id="SSF50104">
    <property type="entry name" value="Translation proteins SH3-like domain"/>
    <property type="match status" value="1"/>
</dbReference>
<name>SPT5_CANAL</name>
<feature type="chain" id="PRO_0000238557" description="Transcription elongation factor SPT5">
    <location>
        <begin position="1"/>
        <end position="956"/>
    </location>
</feature>
<feature type="region of interest" description="Disordered" evidence="2">
    <location>
        <begin position="1"/>
        <end position="156"/>
    </location>
</feature>
<feature type="region of interest" description="Disordered" evidence="2">
    <location>
        <begin position="805"/>
        <end position="835"/>
    </location>
</feature>
<feature type="region of interest" description="Disordered" evidence="2">
    <location>
        <begin position="886"/>
        <end position="956"/>
    </location>
</feature>
<feature type="compositionally biased region" description="Basic and acidic residues" evidence="2">
    <location>
        <begin position="26"/>
        <end position="66"/>
    </location>
</feature>
<feature type="compositionally biased region" description="Acidic residues" evidence="2">
    <location>
        <begin position="67"/>
        <end position="94"/>
    </location>
</feature>
<feature type="compositionally biased region" description="Acidic residues" evidence="2">
    <location>
        <begin position="111"/>
        <end position="129"/>
    </location>
</feature>
<feature type="compositionally biased region" description="Basic and acidic residues" evidence="2">
    <location>
        <begin position="130"/>
        <end position="156"/>
    </location>
</feature>
<feature type="compositionally biased region" description="Low complexity" evidence="2">
    <location>
        <begin position="924"/>
        <end position="938"/>
    </location>
</feature>
<feature type="compositionally biased region" description="Polar residues" evidence="2">
    <location>
        <begin position="939"/>
        <end position="956"/>
    </location>
</feature>
<accession>Q5ALX3</accession>
<accession>A0A1D8PGF9</accession>
<sequence>MSDSDLPVQVKKEPSFANDDDLTFDEEFRRAGDQENKEVENPDDGRSLKRTREESEQEENNEKEQDQEAGQDEEEQDEDEEEEEDDEEEDEEDEVSSRRKRRRGANQFFDIEAEVDDEEEDEEDEDEEAELMREEFITDDHAPVETVEKMPQDDRLHRQYDNRRQQAEDQDAEQLAETLKQRYRKTHSVYRGETAASGTVSQKLLMPSINDPSIYAIRCTPGREKELVRKLYEKKRTLERQGNPLDILTVFQRDAFTGYIYIEAKRPDAIDKALVGMVNVFVRDKLLVPVKEYPDLLKQVKSSDVEIRPGIYVRIKRGIYRGDLAIVDNLSENGLDVRCQVVPRLDYGQNDEIGPDGKVIKSKIKPLPALFSEQKARMYDPYKLQMGRVPNSFIYRGNEYYDGYLYKDFKLQFIQTKDVNPTLEELDRFQNQNDEDGLNLQAIAATLKGNNAGEGKSSTAFQPGDKVEIRRGEQAKTIGIVVETALNEITIKVTDSGDPRFVDQRLTVPANDLRKIFYEGDHVRIVEGKHFDETGLVIKIDGDSVVIVSDQTKEDVRVFANYLVKATDASSNFDLLNSKYDIKDLVELSGLTVGVIIKAEKNIFDVLTTDGRLISVRQSGIASKLKQSRREQVATDRNGTTIRVGDTVKELLGEKSREGAILHIYKNALFIKSNEIVENLGIFVANRMNVTTVATKDSTVSKSLGPDLTSMNPNLRLPNPVAVAGLKTRVGGRDKLLYKDVAVTSGSYKGLKGKVTEADDLYARIELHTKSKKIKVLKNNLNVIVHGQPVPYLRFIGAAPEFSQPTPPTYGSSSGGRSAWNGGMTPSVSAGNGGVSAWGGSRGGFGGDGGKTPAYGAGGASTWGGASAWGGGAGGSSAWGGIKGAGSVWDRSKGGSSASSGNQGGNTAWDRNKGGNSTWDRSKGGSSSWESGSTWEGGNNTTWGSKKGNTSAWGRN</sequence>
<keyword id="KW-0507">mRNA processing</keyword>
<keyword id="KW-0539">Nucleus</keyword>
<keyword id="KW-1185">Reference proteome</keyword>
<keyword id="KW-0804">Transcription</keyword>
<evidence type="ECO:0000250" key="1"/>
<evidence type="ECO:0000256" key="2">
    <source>
        <dbReference type="SAM" id="MobiDB-lite"/>
    </source>
</evidence>
<evidence type="ECO:0000305" key="3"/>